<dbReference type="EC" id="2.7.1.25" evidence="1"/>
<dbReference type="EMBL" id="CP000469">
    <property type="protein sequence ID" value="ABK47104.1"/>
    <property type="molecule type" value="Genomic_DNA"/>
</dbReference>
<dbReference type="RefSeq" id="WP_011716005.1">
    <property type="nucleotide sequence ID" value="NC_008577.1"/>
</dbReference>
<dbReference type="SMR" id="A0KTI5"/>
<dbReference type="STRING" id="94122.Shewana3_0866"/>
<dbReference type="GeneID" id="94726847"/>
<dbReference type="KEGG" id="shn:Shewana3_0866"/>
<dbReference type="eggNOG" id="COG0529">
    <property type="taxonomic scope" value="Bacteria"/>
</dbReference>
<dbReference type="HOGENOM" id="CLU_046932_1_0_6"/>
<dbReference type="OrthoDB" id="9804504at2"/>
<dbReference type="UniPathway" id="UPA00140">
    <property type="reaction ID" value="UER00205"/>
</dbReference>
<dbReference type="Proteomes" id="UP000002589">
    <property type="component" value="Chromosome"/>
</dbReference>
<dbReference type="GO" id="GO:0004020">
    <property type="term" value="F:adenylylsulfate kinase activity"/>
    <property type="evidence" value="ECO:0007669"/>
    <property type="project" value="UniProtKB-UniRule"/>
</dbReference>
<dbReference type="GO" id="GO:0005524">
    <property type="term" value="F:ATP binding"/>
    <property type="evidence" value="ECO:0007669"/>
    <property type="project" value="UniProtKB-UniRule"/>
</dbReference>
<dbReference type="GO" id="GO:0070814">
    <property type="term" value="P:hydrogen sulfide biosynthetic process"/>
    <property type="evidence" value="ECO:0007669"/>
    <property type="project" value="UniProtKB-UniRule"/>
</dbReference>
<dbReference type="GO" id="GO:0000103">
    <property type="term" value="P:sulfate assimilation"/>
    <property type="evidence" value="ECO:0007669"/>
    <property type="project" value="UniProtKB-UniRule"/>
</dbReference>
<dbReference type="CDD" id="cd02027">
    <property type="entry name" value="APSK"/>
    <property type="match status" value="1"/>
</dbReference>
<dbReference type="FunFam" id="3.40.50.300:FF:000212">
    <property type="entry name" value="Adenylyl-sulfate kinase"/>
    <property type="match status" value="1"/>
</dbReference>
<dbReference type="Gene3D" id="3.40.50.300">
    <property type="entry name" value="P-loop containing nucleotide triphosphate hydrolases"/>
    <property type="match status" value="1"/>
</dbReference>
<dbReference type="HAMAP" id="MF_00065">
    <property type="entry name" value="Adenylyl_sulf_kinase"/>
    <property type="match status" value="1"/>
</dbReference>
<dbReference type="InterPro" id="IPR002891">
    <property type="entry name" value="APS_kinase"/>
</dbReference>
<dbReference type="InterPro" id="IPR027417">
    <property type="entry name" value="P-loop_NTPase"/>
</dbReference>
<dbReference type="NCBIfam" id="TIGR00455">
    <property type="entry name" value="apsK"/>
    <property type="match status" value="1"/>
</dbReference>
<dbReference type="NCBIfam" id="NF003013">
    <property type="entry name" value="PRK03846.1"/>
    <property type="match status" value="1"/>
</dbReference>
<dbReference type="PANTHER" id="PTHR11055:SF63">
    <property type="entry name" value="ADENYLYL-SULFATE KINASE 1, CHLOROPLASTIC"/>
    <property type="match status" value="1"/>
</dbReference>
<dbReference type="PANTHER" id="PTHR11055">
    <property type="entry name" value="BIFUNCTIONAL 3'-PHOSPHOADENOSINE 5'-PHOSPHOSULFATE SYNTHASE"/>
    <property type="match status" value="1"/>
</dbReference>
<dbReference type="Pfam" id="PF01583">
    <property type="entry name" value="APS_kinase"/>
    <property type="match status" value="1"/>
</dbReference>
<dbReference type="SUPFAM" id="SSF52540">
    <property type="entry name" value="P-loop containing nucleoside triphosphate hydrolases"/>
    <property type="match status" value="1"/>
</dbReference>
<feature type="chain" id="PRO_1000009027" description="Adenylyl-sulfate kinase">
    <location>
        <begin position="1"/>
        <end position="205"/>
    </location>
</feature>
<feature type="active site" description="Phosphoserine intermediate" evidence="1">
    <location>
        <position position="105"/>
    </location>
</feature>
<feature type="binding site" evidence="1">
    <location>
        <begin position="31"/>
        <end position="38"/>
    </location>
    <ligand>
        <name>ATP</name>
        <dbReference type="ChEBI" id="CHEBI:30616"/>
    </ligand>
</feature>
<evidence type="ECO:0000255" key="1">
    <source>
        <dbReference type="HAMAP-Rule" id="MF_00065"/>
    </source>
</evidence>
<proteinExistence type="inferred from homology"/>
<gene>
    <name evidence="1" type="primary">cysC</name>
    <name type="ordered locus">Shewana3_0866</name>
</gene>
<comment type="function">
    <text evidence="1">Catalyzes the synthesis of activated sulfate.</text>
</comment>
<comment type="catalytic activity">
    <reaction evidence="1">
        <text>adenosine 5'-phosphosulfate + ATP = 3'-phosphoadenylyl sulfate + ADP + H(+)</text>
        <dbReference type="Rhea" id="RHEA:24152"/>
        <dbReference type="ChEBI" id="CHEBI:15378"/>
        <dbReference type="ChEBI" id="CHEBI:30616"/>
        <dbReference type="ChEBI" id="CHEBI:58243"/>
        <dbReference type="ChEBI" id="CHEBI:58339"/>
        <dbReference type="ChEBI" id="CHEBI:456216"/>
        <dbReference type="EC" id="2.7.1.25"/>
    </reaction>
</comment>
<comment type="pathway">
    <text evidence="1">Sulfur metabolism; hydrogen sulfide biosynthesis; sulfite from sulfate: step 2/3.</text>
</comment>
<comment type="similarity">
    <text evidence="1">Belongs to the APS kinase family.</text>
</comment>
<accession>A0KTI5</accession>
<reference key="1">
    <citation type="submission" date="2006-09" db="EMBL/GenBank/DDBJ databases">
        <title>Complete sequence of chromosome 1 of Shewanella sp. ANA-3.</title>
        <authorList>
            <person name="Copeland A."/>
            <person name="Lucas S."/>
            <person name="Lapidus A."/>
            <person name="Barry K."/>
            <person name="Detter J.C."/>
            <person name="Glavina del Rio T."/>
            <person name="Hammon N."/>
            <person name="Israni S."/>
            <person name="Dalin E."/>
            <person name="Tice H."/>
            <person name="Pitluck S."/>
            <person name="Chertkov O."/>
            <person name="Brettin T."/>
            <person name="Bruce D."/>
            <person name="Han C."/>
            <person name="Tapia R."/>
            <person name="Gilna P."/>
            <person name="Schmutz J."/>
            <person name="Larimer F."/>
            <person name="Land M."/>
            <person name="Hauser L."/>
            <person name="Kyrpides N."/>
            <person name="Kim E."/>
            <person name="Newman D."/>
            <person name="Salticov C."/>
            <person name="Konstantinidis K."/>
            <person name="Klappenback J."/>
            <person name="Tiedje J."/>
            <person name="Richardson P."/>
        </authorList>
    </citation>
    <scope>NUCLEOTIDE SEQUENCE [LARGE SCALE GENOMIC DNA]</scope>
    <source>
        <strain>ANA-3</strain>
    </source>
</reference>
<protein>
    <recommendedName>
        <fullName evidence="1">Adenylyl-sulfate kinase</fullName>
        <ecNumber evidence="1">2.7.1.25</ecNumber>
    </recommendedName>
    <alternativeName>
        <fullName evidence="1">APS kinase</fullName>
    </alternativeName>
    <alternativeName>
        <fullName evidence="1">ATP adenosine-5'-phosphosulfate 3'-phosphotransferase</fullName>
    </alternativeName>
    <alternativeName>
        <fullName evidence="1">Adenosine-5'-phosphosulfate kinase</fullName>
    </alternativeName>
</protein>
<name>CYSC_SHESA</name>
<sequence>MSNIVWHQHSVDQAARAKLKGQNPVLLWFTGLSGAGKSTLAGALERALFEAGFHTYLLDGDNVRHGLCKDLGFSVADRDENLRRVGEVAKLMVDAGLVVLSAFISPTREERDSIRARFPEGQFIEVHVSTPLSICEQRDPKGLYVKARRGEISNFTGISSPYEAPLSAELTIDTSKGDLASQVRALIDYLTAIGVINPDKAKALA</sequence>
<organism>
    <name type="scientific">Shewanella sp. (strain ANA-3)</name>
    <dbReference type="NCBI Taxonomy" id="94122"/>
    <lineage>
        <taxon>Bacteria</taxon>
        <taxon>Pseudomonadati</taxon>
        <taxon>Pseudomonadota</taxon>
        <taxon>Gammaproteobacteria</taxon>
        <taxon>Alteromonadales</taxon>
        <taxon>Shewanellaceae</taxon>
        <taxon>Shewanella</taxon>
    </lineage>
</organism>
<keyword id="KW-0067">ATP-binding</keyword>
<keyword id="KW-0418">Kinase</keyword>
<keyword id="KW-0547">Nucleotide-binding</keyword>
<keyword id="KW-0597">Phosphoprotein</keyword>
<keyword id="KW-0808">Transferase</keyword>